<protein>
    <recommendedName>
        <fullName evidence="1">tRNA modification GTPase MnmE</fullName>
        <ecNumber evidence="1">3.6.-.-</ecNumber>
    </recommendedName>
</protein>
<proteinExistence type="inferred from homology"/>
<comment type="function">
    <text evidence="1">Exhibits a very high intrinsic GTPase hydrolysis rate. Involved in the addition of a carboxymethylaminomethyl (cmnm) group at the wobble position (U34) of certain tRNAs, forming tRNA-cmnm(5)s(2)U34.</text>
</comment>
<comment type="cofactor">
    <cofactor evidence="1">
        <name>K(+)</name>
        <dbReference type="ChEBI" id="CHEBI:29103"/>
    </cofactor>
    <text evidence="1">Binds 1 potassium ion per subunit.</text>
</comment>
<comment type="subunit">
    <text evidence="1">Homodimer. Heterotetramer of two MnmE and two MnmG subunits.</text>
</comment>
<comment type="subcellular location">
    <subcellularLocation>
        <location evidence="1">Cytoplasm</location>
    </subcellularLocation>
</comment>
<comment type="similarity">
    <text evidence="1">Belongs to the TRAFAC class TrmE-Era-EngA-EngB-Septin-like GTPase superfamily. TrmE GTPase family.</text>
</comment>
<evidence type="ECO:0000255" key="1">
    <source>
        <dbReference type="HAMAP-Rule" id="MF_00379"/>
    </source>
</evidence>
<accession>A9M9E5</accession>
<name>MNME_BRUC2</name>
<gene>
    <name evidence="1" type="primary">mnmE</name>
    <name evidence="1" type="synonym">trmE</name>
    <name type="ordered locus">BCAN_A2108</name>
</gene>
<keyword id="KW-0963">Cytoplasm</keyword>
<keyword id="KW-0342">GTP-binding</keyword>
<keyword id="KW-0378">Hydrolase</keyword>
<keyword id="KW-0460">Magnesium</keyword>
<keyword id="KW-0479">Metal-binding</keyword>
<keyword id="KW-0547">Nucleotide-binding</keyword>
<keyword id="KW-0630">Potassium</keyword>
<keyword id="KW-1185">Reference proteome</keyword>
<keyword id="KW-0819">tRNA processing</keyword>
<feature type="chain" id="PRO_0000345729" description="tRNA modification GTPase MnmE">
    <location>
        <begin position="1"/>
        <end position="442"/>
    </location>
</feature>
<feature type="domain" description="TrmE-type G">
    <location>
        <begin position="221"/>
        <end position="366"/>
    </location>
</feature>
<feature type="binding site" evidence="1">
    <location>
        <position position="27"/>
    </location>
    <ligand>
        <name>(6S)-5-formyl-5,6,7,8-tetrahydrofolate</name>
        <dbReference type="ChEBI" id="CHEBI:57457"/>
    </ligand>
</feature>
<feature type="binding site" evidence="1">
    <location>
        <position position="84"/>
    </location>
    <ligand>
        <name>(6S)-5-formyl-5,6,7,8-tetrahydrofolate</name>
        <dbReference type="ChEBI" id="CHEBI:57457"/>
    </ligand>
</feature>
<feature type="binding site" evidence="1">
    <location>
        <position position="124"/>
    </location>
    <ligand>
        <name>(6S)-5-formyl-5,6,7,8-tetrahydrofolate</name>
        <dbReference type="ChEBI" id="CHEBI:57457"/>
    </ligand>
</feature>
<feature type="binding site" evidence="1">
    <location>
        <begin position="231"/>
        <end position="236"/>
    </location>
    <ligand>
        <name>GTP</name>
        <dbReference type="ChEBI" id="CHEBI:37565"/>
    </ligand>
</feature>
<feature type="binding site" evidence="1">
    <location>
        <position position="235"/>
    </location>
    <ligand>
        <name>Mg(2+)</name>
        <dbReference type="ChEBI" id="CHEBI:18420"/>
    </ligand>
</feature>
<feature type="binding site" evidence="1">
    <location>
        <begin position="250"/>
        <end position="256"/>
    </location>
    <ligand>
        <name>GTP</name>
        <dbReference type="ChEBI" id="CHEBI:37565"/>
    </ligand>
</feature>
<feature type="binding site" evidence="1">
    <location>
        <position position="256"/>
    </location>
    <ligand>
        <name>Mg(2+)</name>
        <dbReference type="ChEBI" id="CHEBI:18420"/>
    </ligand>
</feature>
<feature type="binding site" evidence="1">
    <location>
        <begin position="275"/>
        <end position="278"/>
    </location>
    <ligand>
        <name>GTP</name>
        <dbReference type="ChEBI" id="CHEBI:37565"/>
    </ligand>
</feature>
<feature type="binding site" evidence="1">
    <location>
        <position position="442"/>
    </location>
    <ligand>
        <name>(6S)-5-formyl-5,6,7,8-tetrahydrofolate</name>
        <dbReference type="ChEBI" id="CHEBI:57457"/>
    </ligand>
</feature>
<organism>
    <name type="scientific">Brucella canis (strain ATCC 23365 / NCTC 10854 / RM-666)</name>
    <dbReference type="NCBI Taxonomy" id="483179"/>
    <lineage>
        <taxon>Bacteria</taxon>
        <taxon>Pseudomonadati</taxon>
        <taxon>Pseudomonadota</taxon>
        <taxon>Alphaproteobacteria</taxon>
        <taxon>Hyphomicrobiales</taxon>
        <taxon>Brucellaceae</taxon>
        <taxon>Brucella/Ochrobactrum group</taxon>
        <taxon>Brucella</taxon>
    </lineage>
</organism>
<sequence length="442" mass="48096">MSEIGSYHDTIFALSSGRLPSGVAVIRISGPKTRFVYETICQAIPEPRHAALLTFRSRNGDAIDRGLILFFPAPHSFTGEDCAEFHLHGGKAVVEKMLAVLGELPGCRIAEAGEFTRRAFANGKMDLTIAEGLADLIAAETEGQRRLAMQVASGNQRKLYSEWRQRLINARAFIEAELDFADESDVPGSVSMQVWQQLSALKHEIEHHIASGKRAAMLRDGLHVVIVGAPNAGKSSLLNFLAGRDVAIISKEAGTTRDLLEVKLDLGGIPVYVTDTAGLRETDSVVEKIGIERARARMAEADLVLSLEDMSGPVSVTVEKIEAETWLIGTKADLGGSASGLWKYHISTMTGSGLEQLLDALQAFAEAKIGQIEDAVPTRQRHINLLRATIEEIEKAIEGDDLPLELRAENMRLASQFLGRITGDVDVEEILDVIFSQFCIGK</sequence>
<reference key="1">
    <citation type="submission" date="2007-10" db="EMBL/GenBank/DDBJ databases">
        <title>Brucella canis ATCC 23365 whole genome shotgun sequencing project.</title>
        <authorList>
            <person name="Setubal J.C."/>
            <person name="Bowns C."/>
            <person name="Boyle S."/>
            <person name="Crasta O.R."/>
            <person name="Czar M.J."/>
            <person name="Dharmanolla C."/>
            <person name="Gillespie J.J."/>
            <person name="Kenyon R.W."/>
            <person name="Lu J."/>
            <person name="Mane S."/>
            <person name="Mohapatra S."/>
            <person name="Nagrani S."/>
            <person name="Purkayastha A."/>
            <person name="Rajasimha H.K."/>
            <person name="Shallom J.M."/>
            <person name="Shallom S."/>
            <person name="Shukla M."/>
            <person name="Snyder E.E."/>
            <person name="Sobral B.W."/>
            <person name="Wattam A.R."/>
            <person name="Will R."/>
            <person name="Williams K."/>
            <person name="Yoo H."/>
            <person name="Bruce D."/>
            <person name="Detter C."/>
            <person name="Munk C."/>
            <person name="Brettin T.S."/>
        </authorList>
    </citation>
    <scope>NUCLEOTIDE SEQUENCE [LARGE SCALE GENOMIC DNA]</scope>
    <source>
        <strain>ATCC 23365 / NCTC 10854 / RM-666</strain>
    </source>
</reference>
<dbReference type="EC" id="3.6.-.-" evidence="1"/>
<dbReference type="EMBL" id="CP000872">
    <property type="protein sequence ID" value="ABX63092.1"/>
    <property type="molecule type" value="Genomic_DNA"/>
</dbReference>
<dbReference type="RefSeq" id="WP_006132993.1">
    <property type="nucleotide sequence ID" value="NC_010103.1"/>
</dbReference>
<dbReference type="SMR" id="A9M9E5"/>
<dbReference type="GeneID" id="55591632"/>
<dbReference type="KEGG" id="bcs:BCAN_A2108"/>
<dbReference type="HOGENOM" id="CLU_019624_3_1_5"/>
<dbReference type="PhylomeDB" id="A9M9E5"/>
<dbReference type="Proteomes" id="UP000001385">
    <property type="component" value="Chromosome I"/>
</dbReference>
<dbReference type="GO" id="GO:0005737">
    <property type="term" value="C:cytoplasm"/>
    <property type="evidence" value="ECO:0007669"/>
    <property type="project" value="UniProtKB-SubCell"/>
</dbReference>
<dbReference type="GO" id="GO:0005525">
    <property type="term" value="F:GTP binding"/>
    <property type="evidence" value="ECO:0007669"/>
    <property type="project" value="UniProtKB-UniRule"/>
</dbReference>
<dbReference type="GO" id="GO:0003924">
    <property type="term" value="F:GTPase activity"/>
    <property type="evidence" value="ECO:0007669"/>
    <property type="project" value="UniProtKB-UniRule"/>
</dbReference>
<dbReference type="GO" id="GO:0046872">
    <property type="term" value="F:metal ion binding"/>
    <property type="evidence" value="ECO:0007669"/>
    <property type="project" value="UniProtKB-KW"/>
</dbReference>
<dbReference type="GO" id="GO:0030488">
    <property type="term" value="P:tRNA methylation"/>
    <property type="evidence" value="ECO:0007669"/>
    <property type="project" value="TreeGrafter"/>
</dbReference>
<dbReference type="GO" id="GO:0002098">
    <property type="term" value="P:tRNA wobble uridine modification"/>
    <property type="evidence" value="ECO:0007669"/>
    <property type="project" value="TreeGrafter"/>
</dbReference>
<dbReference type="CDD" id="cd04164">
    <property type="entry name" value="trmE"/>
    <property type="match status" value="1"/>
</dbReference>
<dbReference type="CDD" id="cd14858">
    <property type="entry name" value="TrmE_N"/>
    <property type="match status" value="1"/>
</dbReference>
<dbReference type="FunFam" id="3.30.1360.120:FF:000007">
    <property type="entry name" value="tRNA modification GTPase GTPBP3, mitochondrial"/>
    <property type="match status" value="1"/>
</dbReference>
<dbReference type="Gene3D" id="3.40.50.300">
    <property type="entry name" value="P-loop containing nucleotide triphosphate hydrolases"/>
    <property type="match status" value="1"/>
</dbReference>
<dbReference type="Gene3D" id="3.30.1360.120">
    <property type="entry name" value="Probable tRNA modification gtpase trme, domain 1"/>
    <property type="match status" value="1"/>
</dbReference>
<dbReference type="Gene3D" id="1.20.120.430">
    <property type="entry name" value="tRNA modification GTPase MnmE domain 2"/>
    <property type="match status" value="1"/>
</dbReference>
<dbReference type="HAMAP" id="MF_00379">
    <property type="entry name" value="GTPase_MnmE"/>
    <property type="match status" value="1"/>
</dbReference>
<dbReference type="InterPro" id="IPR031168">
    <property type="entry name" value="G_TrmE"/>
</dbReference>
<dbReference type="InterPro" id="IPR006073">
    <property type="entry name" value="GTP-bd"/>
</dbReference>
<dbReference type="InterPro" id="IPR018948">
    <property type="entry name" value="GTP-bd_TrmE_N"/>
</dbReference>
<dbReference type="InterPro" id="IPR004520">
    <property type="entry name" value="GTPase_MnmE"/>
</dbReference>
<dbReference type="InterPro" id="IPR027368">
    <property type="entry name" value="MnmE_dom2"/>
</dbReference>
<dbReference type="InterPro" id="IPR025867">
    <property type="entry name" value="MnmE_helical"/>
</dbReference>
<dbReference type="InterPro" id="IPR027417">
    <property type="entry name" value="P-loop_NTPase"/>
</dbReference>
<dbReference type="InterPro" id="IPR005225">
    <property type="entry name" value="Small_GTP-bd"/>
</dbReference>
<dbReference type="InterPro" id="IPR027266">
    <property type="entry name" value="TrmE/GcvT_dom1"/>
</dbReference>
<dbReference type="NCBIfam" id="TIGR00450">
    <property type="entry name" value="mnmE_trmE_thdF"/>
    <property type="match status" value="1"/>
</dbReference>
<dbReference type="NCBIfam" id="NF003661">
    <property type="entry name" value="PRK05291.1-3"/>
    <property type="match status" value="1"/>
</dbReference>
<dbReference type="NCBIfam" id="TIGR00231">
    <property type="entry name" value="small_GTP"/>
    <property type="match status" value="1"/>
</dbReference>
<dbReference type="PANTHER" id="PTHR42714">
    <property type="entry name" value="TRNA MODIFICATION GTPASE GTPBP3"/>
    <property type="match status" value="1"/>
</dbReference>
<dbReference type="PANTHER" id="PTHR42714:SF2">
    <property type="entry name" value="TRNA MODIFICATION GTPASE GTPBP3, MITOCHONDRIAL"/>
    <property type="match status" value="1"/>
</dbReference>
<dbReference type="Pfam" id="PF01926">
    <property type="entry name" value="MMR_HSR1"/>
    <property type="match status" value="1"/>
</dbReference>
<dbReference type="Pfam" id="PF12631">
    <property type="entry name" value="MnmE_helical"/>
    <property type="match status" value="1"/>
</dbReference>
<dbReference type="Pfam" id="PF10396">
    <property type="entry name" value="TrmE_N"/>
    <property type="match status" value="1"/>
</dbReference>
<dbReference type="SUPFAM" id="SSF52540">
    <property type="entry name" value="P-loop containing nucleoside triphosphate hydrolases"/>
    <property type="match status" value="1"/>
</dbReference>
<dbReference type="SUPFAM" id="SSF116878">
    <property type="entry name" value="TrmE connector domain"/>
    <property type="match status" value="1"/>
</dbReference>
<dbReference type="PROSITE" id="PS51709">
    <property type="entry name" value="G_TRME"/>
    <property type="match status" value="1"/>
</dbReference>